<comment type="function">
    <text evidence="2">ATPase that binds to both the 70S ribosome and the 50S ribosomal subunit in a nucleotide-independent manner.</text>
</comment>
<comment type="cofactor">
    <cofactor evidence="1">
        <name>Mg(2+)</name>
        <dbReference type="ChEBI" id="CHEBI:18420"/>
    </cofactor>
</comment>
<comment type="similarity">
    <text evidence="2">Belongs to the TRAFAC class OBG-HflX-like GTPase superfamily. OBG GTPase family. YchF/OLA1 subfamily.</text>
</comment>
<gene>
    <name evidence="2" type="primary">ychF</name>
    <name type="synonym">engD</name>
    <name type="ordered locus">SF1206</name>
    <name type="ordered locus">S1290</name>
</gene>
<feature type="initiator methionine" description="Removed" evidence="1">
    <location>
        <position position="1"/>
    </location>
</feature>
<feature type="chain" id="PRO_0000201680" description="Ribosome-binding ATPase YchF">
    <location>
        <begin position="2"/>
        <end position="363"/>
    </location>
</feature>
<feature type="domain" description="OBG-type G">
    <location>
        <begin position="3"/>
        <end position="256"/>
    </location>
</feature>
<feature type="domain" description="TGS" evidence="3">
    <location>
        <begin position="278"/>
        <end position="361"/>
    </location>
</feature>
<feature type="binding site" evidence="2">
    <location>
        <begin position="12"/>
        <end position="17"/>
    </location>
    <ligand>
        <name>ATP</name>
        <dbReference type="ChEBI" id="CHEBI:30616"/>
    </ligand>
</feature>
<feature type="binding site" evidence="1">
    <location>
        <position position="16"/>
    </location>
    <ligand>
        <name>Mg(2+)</name>
        <dbReference type="ChEBI" id="CHEBI:18420"/>
    </ligand>
</feature>
<feature type="binding site" evidence="1">
    <location>
        <position position="36"/>
    </location>
    <ligand>
        <name>Mg(2+)</name>
        <dbReference type="ChEBI" id="CHEBI:18420"/>
    </ligand>
</feature>
<accession>P0ABU4</accession>
<accession>P31216</accession>
<accession>P76018</accession>
<organism>
    <name type="scientific">Shigella flexneri</name>
    <dbReference type="NCBI Taxonomy" id="623"/>
    <lineage>
        <taxon>Bacteria</taxon>
        <taxon>Pseudomonadati</taxon>
        <taxon>Pseudomonadota</taxon>
        <taxon>Gammaproteobacteria</taxon>
        <taxon>Enterobacterales</taxon>
        <taxon>Enterobacteriaceae</taxon>
        <taxon>Shigella</taxon>
    </lineage>
</organism>
<reference key="1">
    <citation type="journal article" date="2002" name="Nucleic Acids Res.">
        <title>Genome sequence of Shigella flexneri 2a: insights into pathogenicity through comparison with genomes of Escherichia coli K12 and O157.</title>
        <authorList>
            <person name="Jin Q."/>
            <person name="Yuan Z."/>
            <person name="Xu J."/>
            <person name="Wang Y."/>
            <person name="Shen Y."/>
            <person name="Lu W."/>
            <person name="Wang J."/>
            <person name="Liu H."/>
            <person name="Yang J."/>
            <person name="Yang F."/>
            <person name="Zhang X."/>
            <person name="Zhang J."/>
            <person name="Yang G."/>
            <person name="Wu H."/>
            <person name="Qu D."/>
            <person name="Dong J."/>
            <person name="Sun L."/>
            <person name="Xue Y."/>
            <person name="Zhao A."/>
            <person name="Gao Y."/>
            <person name="Zhu J."/>
            <person name="Kan B."/>
            <person name="Ding K."/>
            <person name="Chen S."/>
            <person name="Cheng H."/>
            <person name="Yao Z."/>
            <person name="He B."/>
            <person name="Chen R."/>
            <person name="Ma D."/>
            <person name="Qiang B."/>
            <person name="Wen Y."/>
            <person name="Hou Y."/>
            <person name="Yu J."/>
        </authorList>
    </citation>
    <scope>NUCLEOTIDE SEQUENCE [LARGE SCALE GENOMIC DNA]</scope>
    <source>
        <strain>301 / Serotype 2a</strain>
    </source>
</reference>
<reference key="2">
    <citation type="journal article" date="2003" name="Infect. Immun.">
        <title>Complete genome sequence and comparative genomics of Shigella flexneri serotype 2a strain 2457T.</title>
        <authorList>
            <person name="Wei J."/>
            <person name="Goldberg M.B."/>
            <person name="Burland V."/>
            <person name="Venkatesan M.M."/>
            <person name="Deng W."/>
            <person name="Fournier G."/>
            <person name="Mayhew G.F."/>
            <person name="Plunkett G. III"/>
            <person name="Rose D.J."/>
            <person name="Darling A."/>
            <person name="Mau B."/>
            <person name="Perna N.T."/>
            <person name="Payne S.M."/>
            <person name="Runyen-Janecky L.J."/>
            <person name="Zhou S."/>
            <person name="Schwartz D.C."/>
            <person name="Blattner F.R."/>
        </authorList>
    </citation>
    <scope>NUCLEOTIDE SEQUENCE [LARGE SCALE GENOMIC DNA]</scope>
    <source>
        <strain>ATCC 700930 / 2457T / Serotype 2a</strain>
    </source>
</reference>
<keyword id="KW-0067">ATP-binding</keyword>
<keyword id="KW-0460">Magnesium</keyword>
<keyword id="KW-0479">Metal-binding</keyword>
<keyword id="KW-0547">Nucleotide-binding</keyword>
<keyword id="KW-1185">Reference proteome</keyword>
<proteinExistence type="inferred from homology"/>
<dbReference type="EMBL" id="AE005674">
    <property type="protein sequence ID" value="AAN42819.1"/>
    <property type="molecule type" value="Genomic_DNA"/>
</dbReference>
<dbReference type="EMBL" id="AE014073">
    <property type="protein sequence ID" value="AAP16705.1"/>
    <property type="molecule type" value="Genomic_DNA"/>
</dbReference>
<dbReference type="RefSeq" id="NP_707112.1">
    <property type="nucleotide sequence ID" value="NC_004337.2"/>
</dbReference>
<dbReference type="RefSeq" id="WP_000505866.1">
    <property type="nucleotide sequence ID" value="NZ_WPGW01000029.1"/>
</dbReference>
<dbReference type="SMR" id="P0ABU4"/>
<dbReference type="STRING" id="198214.SF1206"/>
<dbReference type="PaxDb" id="198214-SF1206"/>
<dbReference type="GeneID" id="1024185"/>
<dbReference type="GeneID" id="75171314"/>
<dbReference type="KEGG" id="sfl:SF1206"/>
<dbReference type="KEGG" id="sfx:S1290"/>
<dbReference type="PATRIC" id="fig|198214.7.peg.1423"/>
<dbReference type="HOGENOM" id="CLU_018395_0_1_6"/>
<dbReference type="Proteomes" id="UP000001006">
    <property type="component" value="Chromosome"/>
</dbReference>
<dbReference type="Proteomes" id="UP000002673">
    <property type="component" value="Chromosome"/>
</dbReference>
<dbReference type="GO" id="GO:0005737">
    <property type="term" value="C:cytoplasm"/>
    <property type="evidence" value="ECO:0007669"/>
    <property type="project" value="TreeGrafter"/>
</dbReference>
<dbReference type="GO" id="GO:0005524">
    <property type="term" value="F:ATP binding"/>
    <property type="evidence" value="ECO:0007669"/>
    <property type="project" value="UniProtKB-UniRule"/>
</dbReference>
<dbReference type="GO" id="GO:0016887">
    <property type="term" value="F:ATP hydrolysis activity"/>
    <property type="evidence" value="ECO:0007669"/>
    <property type="project" value="UniProtKB-UniRule"/>
</dbReference>
<dbReference type="GO" id="GO:0005525">
    <property type="term" value="F:GTP binding"/>
    <property type="evidence" value="ECO:0007669"/>
    <property type="project" value="InterPro"/>
</dbReference>
<dbReference type="GO" id="GO:0046872">
    <property type="term" value="F:metal ion binding"/>
    <property type="evidence" value="ECO:0007669"/>
    <property type="project" value="UniProtKB-KW"/>
</dbReference>
<dbReference type="GO" id="GO:0043023">
    <property type="term" value="F:ribosomal large subunit binding"/>
    <property type="evidence" value="ECO:0007669"/>
    <property type="project" value="UniProtKB-UniRule"/>
</dbReference>
<dbReference type="CDD" id="cd04867">
    <property type="entry name" value="TGS_YchF_OLA1"/>
    <property type="match status" value="1"/>
</dbReference>
<dbReference type="CDD" id="cd01900">
    <property type="entry name" value="YchF"/>
    <property type="match status" value="1"/>
</dbReference>
<dbReference type="FunFam" id="1.10.150.300:FF:000002">
    <property type="entry name" value="Ribosome-binding ATPase YchF"/>
    <property type="match status" value="1"/>
</dbReference>
<dbReference type="FunFam" id="3.10.20.30:FF:000001">
    <property type="entry name" value="Ribosome-binding ATPase YchF"/>
    <property type="match status" value="1"/>
</dbReference>
<dbReference type="Gene3D" id="3.10.20.30">
    <property type="match status" value="1"/>
</dbReference>
<dbReference type="Gene3D" id="3.40.50.300">
    <property type="entry name" value="P-loop containing nucleotide triphosphate hydrolases"/>
    <property type="match status" value="1"/>
</dbReference>
<dbReference type="Gene3D" id="1.10.150.300">
    <property type="entry name" value="TGS-like domain"/>
    <property type="match status" value="1"/>
</dbReference>
<dbReference type="HAMAP" id="MF_00944">
    <property type="entry name" value="YchF_OLA1_ATPase"/>
    <property type="match status" value="1"/>
</dbReference>
<dbReference type="InterPro" id="IPR004396">
    <property type="entry name" value="ATPase_YchF/OLA1"/>
</dbReference>
<dbReference type="InterPro" id="IPR012675">
    <property type="entry name" value="Beta-grasp_dom_sf"/>
</dbReference>
<dbReference type="InterPro" id="IPR031167">
    <property type="entry name" value="G_OBG"/>
</dbReference>
<dbReference type="InterPro" id="IPR006073">
    <property type="entry name" value="GTP-bd"/>
</dbReference>
<dbReference type="InterPro" id="IPR027417">
    <property type="entry name" value="P-loop_NTPase"/>
</dbReference>
<dbReference type="InterPro" id="IPR004095">
    <property type="entry name" value="TGS"/>
</dbReference>
<dbReference type="InterPro" id="IPR012676">
    <property type="entry name" value="TGS-like"/>
</dbReference>
<dbReference type="InterPro" id="IPR023192">
    <property type="entry name" value="TGS-like_dom_sf"/>
</dbReference>
<dbReference type="InterPro" id="IPR013029">
    <property type="entry name" value="YchF_C"/>
</dbReference>
<dbReference type="InterPro" id="IPR041706">
    <property type="entry name" value="YchF_N"/>
</dbReference>
<dbReference type="NCBIfam" id="TIGR00092">
    <property type="entry name" value="redox-regulated ATPase YchF"/>
    <property type="match status" value="1"/>
</dbReference>
<dbReference type="PANTHER" id="PTHR23305">
    <property type="entry name" value="OBG GTPASE FAMILY"/>
    <property type="match status" value="1"/>
</dbReference>
<dbReference type="PANTHER" id="PTHR23305:SF18">
    <property type="entry name" value="OBG-TYPE G DOMAIN-CONTAINING PROTEIN"/>
    <property type="match status" value="1"/>
</dbReference>
<dbReference type="Pfam" id="PF01926">
    <property type="entry name" value="MMR_HSR1"/>
    <property type="match status" value="1"/>
</dbReference>
<dbReference type="Pfam" id="PF06071">
    <property type="entry name" value="YchF-GTPase_C"/>
    <property type="match status" value="1"/>
</dbReference>
<dbReference type="PIRSF" id="PIRSF006641">
    <property type="entry name" value="CHP00092"/>
    <property type="match status" value="1"/>
</dbReference>
<dbReference type="PRINTS" id="PR00326">
    <property type="entry name" value="GTP1OBG"/>
</dbReference>
<dbReference type="SUPFAM" id="SSF52540">
    <property type="entry name" value="P-loop containing nucleoside triphosphate hydrolases"/>
    <property type="match status" value="1"/>
</dbReference>
<dbReference type="SUPFAM" id="SSF81271">
    <property type="entry name" value="TGS-like"/>
    <property type="match status" value="1"/>
</dbReference>
<dbReference type="PROSITE" id="PS51710">
    <property type="entry name" value="G_OBG"/>
    <property type="match status" value="1"/>
</dbReference>
<dbReference type="PROSITE" id="PS51880">
    <property type="entry name" value="TGS"/>
    <property type="match status" value="1"/>
</dbReference>
<protein>
    <recommendedName>
        <fullName evidence="2">Ribosome-binding ATPase YchF</fullName>
    </recommendedName>
</protein>
<name>YCHF_SHIFL</name>
<sequence length="363" mass="39667">MGFKCGIVGLPNVGKSTLFNALTKAGIEAANFPFCTIEPNTGVVPMPDPRLDQLAEIVKPQRTLPTTMEFVDIAGLVKGASKGEGLGNQFLTNIRETEAIGHVVRCFENDNIIHVSGKVNPADDIEVINTELALADLDTCERAIHRVQKKAKGGDKDAKAELAVLEKCLPQLENAGMLRALDLSAEEKAAIRYLSFLTLKPTMYIANVNEDGFENNPYLDQVREIAAKEGSVVVPVCAAVEADIAELDDEERDEFMQELGLEEPGLNRVIRAGYKLLNLQTYFTAGVKEVRAWTIPVGATAPQAAGKIHTDFEKGFIRAQTISFEDFITYKGEQGAKEAGKMRAEGKDYIVKDGDVMNFLFNV</sequence>
<evidence type="ECO:0000250" key="1"/>
<evidence type="ECO:0000255" key="2">
    <source>
        <dbReference type="HAMAP-Rule" id="MF_00944"/>
    </source>
</evidence>
<evidence type="ECO:0000255" key="3">
    <source>
        <dbReference type="PROSITE-ProRule" id="PRU01228"/>
    </source>
</evidence>